<protein>
    <recommendedName>
        <fullName evidence="4">G-protein complex alpha subunit gpaA</fullName>
    </recommendedName>
    <alternativeName>
        <fullName evidence="5">Guanine nucleotide-binding protein subunit alpha</fullName>
    </alternativeName>
</protein>
<organism>
    <name type="scientific">Aspergillus fumigatus (strain CBS 144.89 / FGSC A1163 / CEA10)</name>
    <name type="common">Neosartorya fumigata</name>
    <dbReference type="NCBI Taxonomy" id="451804"/>
    <lineage>
        <taxon>Eukaryota</taxon>
        <taxon>Fungi</taxon>
        <taxon>Dikarya</taxon>
        <taxon>Ascomycota</taxon>
        <taxon>Pezizomycotina</taxon>
        <taxon>Eurotiomycetes</taxon>
        <taxon>Eurotiomycetidae</taxon>
        <taxon>Eurotiales</taxon>
        <taxon>Aspergillaceae</taxon>
        <taxon>Aspergillus</taxon>
        <taxon>Aspergillus subgen. Fumigati</taxon>
    </lineage>
</organism>
<name>GPAA_ASPFC</name>
<feature type="chain" id="PRO_0000454888" description="G-protein complex alpha subunit gpaA">
    <location>
        <begin position="1"/>
        <end position="353"/>
    </location>
</feature>
<feature type="domain" description="G-alpha" evidence="1">
    <location>
        <begin position="32"/>
        <end position="353"/>
    </location>
</feature>
<feature type="region of interest" description="Disordered" evidence="2">
    <location>
        <begin position="1"/>
        <end position="25"/>
    </location>
</feature>
<feature type="region of interest" description="G1 motif" evidence="1">
    <location>
        <begin position="35"/>
        <end position="48"/>
    </location>
</feature>
<feature type="region of interest" description="G2 motif" evidence="1">
    <location>
        <begin position="173"/>
        <end position="181"/>
    </location>
</feature>
<feature type="region of interest" description="G3 motif" evidence="1">
    <location>
        <begin position="196"/>
        <end position="205"/>
    </location>
</feature>
<feature type="region of interest" description="G4 motif" evidence="1">
    <location>
        <begin position="265"/>
        <end position="272"/>
    </location>
</feature>
<feature type="region of interest" description="G5 motif" evidence="1">
    <location>
        <begin position="323"/>
        <end position="328"/>
    </location>
</feature>
<feature type="compositionally biased region" description="Basic and acidic residues" evidence="2">
    <location>
        <begin position="7"/>
        <end position="25"/>
    </location>
</feature>
<feature type="binding site" evidence="1">
    <location>
        <position position="47"/>
    </location>
    <ligand>
        <name>a divalent metal cation</name>
        <dbReference type="ChEBI" id="CHEBI:60240"/>
    </ligand>
</feature>
<feature type="binding site" evidence="1">
    <location>
        <position position="181"/>
    </location>
    <ligand>
        <name>a divalent metal cation</name>
        <dbReference type="ChEBI" id="CHEBI:60240"/>
    </ligand>
</feature>
<comment type="function">
    <text evidence="3">G-protein complex alpha subunit that plays a role in conidiation and regulation of the biosynthesis of secondary metabolites such as dihydroxynaphthalene (DHN)-melanin, via interaction with the G protein-coupled receptor gprM.</text>
</comment>
<comment type="subunit">
    <text evidence="3 5">G proteins are composed of 3 units; alpha, beta and gamma. The alpha chain contains the guanine nucleotide binding site (Probable). Interacts with gprM (PubMed:30914505).</text>
</comment>
<comment type="disruption phenotype">
    <text evidence="3">Leads to a strong increase of dihydroxynaphthalene (DHN)-melanin production.</text>
</comment>
<comment type="similarity">
    <text evidence="5">Belongs to the G-alpha family. G(q) subfamily.</text>
</comment>
<gene>
    <name evidence="4" type="primary">gpaA</name>
    <name type="ORF">AFUB_012620</name>
</gene>
<proteinExistence type="evidence at protein level"/>
<sequence length="353" mass="40769">MGCGMSTEDKEGKARNEEIENQLKRDKMMQRNEIKMLLLGAGESGKSTILKQMKLIHEGGYSRDERESFKEIIYSNTVQSMRVILEAMESLELPLEDARNEYHVQTIFMQPAQIEGDSLPPEVGNAIGALWRDTGVQECFKRSREYQLNDSAKYYFDAIDRIAQPDYLPTDQDVLRSRVKTTGITETTFIIGDLTYRMFDVGGQRSERKKWIHCFENVTTILFLVAISEYDQLLFEDETVNRMQEALTLFDSICNSRWFVKTSIILFLNKIDRFKEKLPVSPMKNYFPDYEGGADYAAACDYILNRFVSLNQAEQKQIYTHFTCATDTTQIRFVMAAVNDIIIQENLRLCGLI</sequence>
<dbReference type="EMBL" id="DS499594">
    <property type="protein sequence ID" value="EDP56551.1"/>
    <property type="molecule type" value="Genomic_DNA"/>
</dbReference>
<dbReference type="SMR" id="B0XRA0"/>
<dbReference type="EnsemblFungi" id="EDP56551">
    <property type="protein sequence ID" value="EDP56551"/>
    <property type="gene ID" value="AFUB_012620"/>
</dbReference>
<dbReference type="VEuPathDB" id="FungiDB:AFUB_012620"/>
<dbReference type="HOGENOM" id="CLU_014184_6_0_1"/>
<dbReference type="OrthoDB" id="27019at5052"/>
<dbReference type="PhylomeDB" id="B0XRA0"/>
<dbReference type="Proteomes" id="UP000001699">
    <property type="component" value="Unassembled WGS sequence"/>
</dbReference>
<dbReference type="GO" id="GO:0005737">
    <property type="term" value="C:cytoplasm"/>
    <property type="evidence" value="ECO:0007669"/>
    <property type="project" value="TreeGrafter"/>
</dbReference>
<dbReference type="GO" id="GO:0005834">
    <property type="term" value="C:heterotrimeric G-protein complex"/>
    <property type="evidence" value="ECO:0007669"/>
    <property type="project" value="InterPro"/>
</dbReference>
<dbReference type="GO" id="GO:0001664">
    <property type="term" value="F:G protein-coupled receptor binding"/>
    <property type="evidence" value="ECO:0007669"/>
    <property type="project" value="InterPro"/>
</dbReference>
<dbReference type="GO" id="GO:0031683">
    <property type="term" value="F:G-protein beta/gamma-subunit complex binding"/>
    <property type="evidence" value="ECO:0007669"/>
    <property type="project" value="InterPro"/>
</dbReference>
<dbReference type="GO" id="GO:0005525">
    <property type="term" value="F:GTP binding"/>
    <property type="evidence" value="ECO:0007669"/>
    <property type="project" value="UniProtKB-KW"/>
</dbReference>
<dbReference type="GO" id="GO:0003924">
    <property type="term" value="F:GTPase activity"/>
    <property type="evidence" value="ECO:0007669"/>
    <property type="project" value="InterPro"/>
</dbReference>
<dbReference type="GO" id="GO:0046872">
    <property type="term" value="F:metal ion binding"/>
    <property type="evidence" value="ECO:0007669"/>
    <property type="project" value="UniProtKB-KW"/>
</dbReference>
<dbReference type="GO" id="GO:0007186">
    <property type="term" value="P:G protein-coupled receptor signaling pathway"/>
    <property type="evidence" value="ECO:0007669"/>
    <property type="project" value="InterPro"/>
</dbReference>
<dbReference type="GO" id="GO:0000750">
    <property type="term" value="P:pheromone-dependent signal transduction involved in conjugation with cellular fusion"/>
    <property type="evidence" value="ECO:0007669"/>
    <property type="project" value="TreeGrafter"/>
</dbReference>
<dbReference type="CDD" id="cd00066">
    <property type="entry name" value="G-alpha"/>
    <property type="match status" value="1"/>
</dbReference>
<dbReference type="FunFam" id="1.10.400.10:FF:000001">
    <property type="entry name" value="Guanine nucleotide-binding protein G(I) subunit alpha"/>
    <property type="match status" value="1"/>
</dbReference>
<dbReference type="FunFam" id="3.40.50.300:FF:000051">
    <property type="entry name" value="Guanine nucleotide-binding protein subunit alpha"/>
    <property type="match status" value="1"/>
</dbReference>
<dbReference type="FunFam" id="3.40.50.300:FF:000692">
    <property type="entry name" value="Guanine nucleotide-binding protein subunit alpha"/>
    <property type="match status" value="1"/>
</dbReference>
<dbReference type="Gene3D" id="1.10.400.10">
    <property type="entry name" value="GI Alpha 1, domain 2-like"/>
    <property type="match status" value="1"/>
</dbReference>
<dbReference type="Gene3D" id="3.40.50.300">
    <property type="entry name" value="P-loop containing nucleotide triphosphate hydrolases"/>
    <property type="match status" value="1"/>
</dbReference>
<dbReference type="InterPro" id="IPR002975">
    <property type="entry name" value="Fungi_Gprotein_alpha"/>
</dbReference>
<dbReference type="InterPro" id="IPR001019">
    <property type="entry name" value="Gprotein_alpha_su"/>
</dbReference>
<dbReference type="InterPro" id="IPR011025">
    <property type="entry name" value="GproteinA_insert"/>
</dbReference>
<dbReference type="InterPro" id="IPR027417">
    <property type="entry name" value="P-loop_NTPase"/>
</dbReference>
<dbReference type="PANTHER" id="PTHR10218">
    <property type="entry name" value="GTP-BINDING PROTEIN ALPHA SUBUNIT"/>
    <property type="match status" value="1"/>
</dbReference>
<dbReference type="PANTHER" id="PTHR10218:SF302">
    <property type="entry name" value="GUANINE NUCLEOTIDE-BINDING PROTEIN ALPHA-5 SUBUNIT"/>
    <property type="match status" value="1"/>
</dbReference>
<dbReference type="Pfam" id="PF00503">
    <property type="entry name" value="G-alpha"/>
    <property type="match status" value="1"/>
</dbReference>
<dbReference type="PRINTS" id="PR00318">
    <property type="entry name" value="GPROTEINA"/>
</dbReference>
<dbReference type="PRINTS" id="PR01241">
    <property type="entry name" value="GPROTEINAFNG"/>
</dbReference>
<dbReference type="SMART" id="SM00275">
    <property type="entry name" value="G_alpha"/>
    <property type="match status" value="1"/>
</dbReference>
<dbReference type="SUPFAM" id="SSF52540">
    <property type="entry name" value="P-loop containing nucleoside triphosphate hydrolases"/>
    <property type="match status" value="1"/>
</dbReference>
<dbReference type="SUPFAM" id="SSF47895">
    <property type="entry name" value="Transducin (alpha subunit), insertion domain"/>
    <property type="match status" value="1"/>
</dbReference>
<dbReference type="PROSITE" id="PS51882">
    <property type="entry name" value="G_ALPHA"/>
    <property type="match status" value="1"/>
</dbReference>
<keyword id="KW-0342">GTP-binding</keyword>
<keyword id="KW-0479">Metal-binding</keyword>
<keyword id="KW-0547">Nucleotide-binding</keyword>
<keyword id="KW-0807">Transducer</keyword>
<evidence type="ECO:0000255" key="1">
    <source>
        <dbReference type="PROSITE-ProRule" id="PRU01230"/>
    </source>
</evidence>
<evidence type="ECO:0000256" key="2">
    <source>
        <dbReference type="SAM" id="MobiDB-lite"/>
    </source>
</evidence>
<evidence type="ECO:0000269" key="3">
    <source>
    </source>
</evidence>
<evidence type="ECO:0000303" key="4">
    <source>
    </source>
</evidence>
<evidence type="ECO:0000305" key="5"/>
<accession>B0XRA0</accession>
<reference key="1">
    <citation type="journal article" date="2008" name="PLoS Genet.">
        <title>Genomic islands in the pathogenic filamentous fungus Aspergillus fumigatus.</title>
        <authorList>
            <person name="Fedorova N.D."/>
            <person name="Khaldi N."/>
            <person name="Joardar V.S."/>
            <person name="Maiti R."/>
            <person name="Amedeo P."/>
            <person name="Anderson M.J."/>
            <person name="Crabtree J."/>
            <person name="Silva J.C."/>
            <person name="Badger J.H."/>
            <person name="Albarraq A."/>
            <person name="Angiuoli S."/>
            <person name="Bussey H."/>
            <person name="Bowyer P."/>
            <person name="Cotty P.J."/>
            <person name="Dyer P.S."/>
            <person name="Egan A."/>
            <person name="Galens K."/>
            <person name="Fraser-Liggett C.M."/>
            <person name="Haas B.J."/>
            <person name="Inman J.M."/>
            <person name="Kent R."/>
            <person name="Lemieux S."/>
            <person name="Malavazi I."/>
            <person name="Orvis J."/>
            <person name="Roemer T."/>
            <person name="Ronning C.M."/>
            <person name="Sundaram J.P."/>
            <person name="Sutton G."/>
            <person name="Turner G."/>
            <person name="Venter J.C."/>
            <person name="White O.R."/>
            <person name="Whitty B.R."/>
            <person name="Youngman P."/>
            <person name="Wolfe K.H."/>
            <person name="Goldman G.H."/>
            <person name="Wortman J.R."/>
            <person name="Jiang B."/>
            <person name="Denning D.W."/>
            <person name="Nierman W.C."/>
        </authorList>
    </citation>
    <scope>NUCLEOTIDE SEQUENCE [LARGE SCALE GENOMIC DNA]</scope>
    <source>
        <strain>CBS 144.89 / FGSC A1163 / CEA10</strain>
    </source>
</reference>
<reference key="2">
    <citation type="journal article" date="2019" name="MBio">
        <title>Mitogen-activated protein kinase cross-talk interaction modulates the production of melanins in Aspergillus fumigatus.</title>
        <authorList>
            <person name="Manfiolli A.O."/>
            <person name="Siqueira F.S."/>
            <person name="Dos Reis T.F."/>
            <person name="Van Dijck P."/>
            <person name="Schrevens S."/>
            <person name="Hoefgen S."/>
            <person name="Foege M."/>
            <person name="Strassburger M."/>
            <person name="de Assis L.J."/>
            <person name="Heinekamp T."/>
            <person name="Rocha M.C."/>
            <person name="Janevska S."/>
            <person name="Brakhage A.A."/>
            <person name="Malavazi I."/>
            <person name="Goldman G.H."/>
            <person name="Valiante V."/>
        </authorList>
    </citation>
    <scope>FUNCTION</scope>
    <scope>DISRUPTION PHENOTYPE</scope>
    <scope>INTERACTION WITH GPRM</scope>
</reference>